<sequence>MKIRPLQDRLIVKRVAEENKTKGGLFIPDTAKEKPLEGKVIAVGNGKVQEDGKVRPLDIKAGDTILFSKYAGTEIKLDGEEHLILREEDVLGVIEK</sequence>
<reference key="1">
    <citation type="journal article" date="2006" name="Proc. Natl. Acad. Sci. U.S.A.">
        <title>Evolution of sensory complexity recorded in a myxobacterial genome.</title>
        <authorList>
            <person name="Goldman B.S."/>
            <person name="Nierman W.C."/>
            <person name="Kaiser D."/>
            <person name="Slater S.C."/>
            <person name="Durkin A.S."/>
            <person name="Eisen J.A."/>
            <person name="Ronning C.M."/>
            <person name="Barbazuk W.B."/>
            <person name="Blanchard M."/>
            <person name="Field C."/>
            <person name="Halling C."/>
            <person name="Hinkle G."/>
            <person name="Iartchuk O."/>
            <person name="Kim H.S."/>
            <person name="Mackenzie C."/>
            <person name="Madupu R."/>
            <person name="Miller N."/>
            <person name="Shvartsbeyn A."/>
            <person name="Sullivan S.A."/>
            <person name="Vaudin M."/>
            <person name="Wiegand R."/>
            <person name="Kaplan H.B."/>
        </authorList>
    </citation>
    <scope>NUCLEOTIDE SEQUENCE [LARGE SCALE GENOMIC DNA]</scope>
    <source>
        <strain>DK1622</strain>
    </source>
</reference>
<accession>Q1D2S2</accession>
<protein>
    <recommendedName>
        <fullName evidence="1">Co-chaperonin GroES</fullName>
    </recommendedName>
    <alternativeName>
        <fullName evidence="1">10 kDa chaperonin</fullName>
    </alternativeName>
    <alternativeName>
        <fullName evidence="1">Chaperonin-10</fullName>
        <shortName evidence="1">Cpn10</shortName>
    </alternativeName>
</protein>
<proteinExistence type="inferred from homology"/>
<keyword id="KW-0143">Chaperone</keyword>
<keyword id="KW-0963">Cytoplasm</keyword>
<keyword id="KW-1185">Reference proteome</keyword>
<comment type="function">
    <text evidence="1">Together with the chaperonin GroEL, plays an essential role in assisting protein folding. The GroEL-GroES system forms a nano-cage that allows encapsulation of the non-native substrate proteins and provides a physical environment optimized to promote and accelerate protein folding. GroES binds to the apical surface of the GroEL ring, thereby capping the opening of the GroEL channel.</text>
</comment>
<comment type="subunit">
    <text evidence="1">Heptamer of 7 subunits arranged in a ring. Interacts with the chaperonin GroEL.</text>
</comment>
<comment type="subcellular location">
    <subcellularLocation>
        <location evidence="1">Cytoplasm</location>
    </subcellularLocation>
</comment>
<comment type="similarity">
    <text evidence="1">Belongs to the GroES chaperonin family.</text>
</comment>
<dbReference type="EMBL" id="CP000113">
    <property type="protein sequence ID" value="ABF89063.1"/>
    <property type="molecule type" value="Genomic_DNA"/>
</dbReference>
<dbReference type="RefSeq" id="WP_002640434.1">
    <property type="nucleotide sequence ID" value="NC_008095.1"/>
</dbReference>
<dbReference type="SMR" id="Q1D2S2"/>
<dbReference type="STRING" id="246197.MXAN_4894"/>
<dbReference type="EnsemblBacteria" id="ABF89063">
    <property type="protein sequence ID" value="ABF89063"/>
    <property type="gene ID" value="MXAN_4894"/>
</dbReference>
<dbReference type="GeneID" id="41362184"/>
<dbReference type="KEGG" id="mxa:MXAN_4894"/>
<dbReference type="eggNOG" id="COG0234">
    <property type="taxonomic scope" value="Bacteria"/>
</dbReference>
<dbReference type="HOGENOM" id="CLU_132825_2_0_7"/>
<dbReference type="OrthoDB" id="9806791at2"/>
<dbReference type="Proteomes" id="UP000002402">
    <property type="component" value="Chromosome"/>
</dbReference>
<dbReference type="GO" id="GO:0005737">
    <property type="term" value="C:cytoplasm"/>
    <property type="evidence" value="ECO:0007669"/>
    <property type="project" value="UniProtKB-SubCell"/>
</dbReference>
<dbReference type="GO" id="GO:0005524">
    <property type="term" value="F:ATP binding"/>
    <property type="evidence" value="ECO:0007669"/>
    <property type="project" value="InterPro"/>
</dbReference>
<dbReference type="GO" id="GO:0046872">
    <property type="term" value="F:metal ion binding"/>
    <property type="evidence" value="ECO:0007669"/>
    <property type="project" value="TreeGrafter"/>
</dbReference>
<dbReference type="GO" id="GO:0044183">
    <property type="term" value="F:protein folding chaperone"/>
    <property type="evidence" value="ECO:0007669"/>
    <property type="project" value="InterPro"/>
</dbReference>
<dbReference type="GO" id="GO:0051087">
    <property type="term" value="F:protein-folding chaperone binding"/>
    <property type="evidence" value="ECO:0007669"/>
    <property type="project" value="TreeGrafter"/>
</dbReference>
<dbReference type="GO" id="GO:0051082">
    <property type="term" value="F:unfolded protein binding"/>
    <property type="evidence" value="ECO:0007669"/>
    <property type="project" value="TreeGrafter"/>
</dbReference>
<dbReference type="GO" id="GO:0051085">
    <property type="term" value="P:chaperone cofactor-dependent protein refolding"/>
    <property type="evidence" value="ECO:0007669"/>
    <property type="project" value="TreeGrafter"/>
</dbReference>
<dbReference type="CDD" id="cd00320">
    <property type="entry name" value="cpn10"/>
    <property type="match status" value="1"/>
</dbReference>
<dbReference type="FunFam" id="2.30.33.40:FF:000001">
    <property type="entry name" value="10 kDa chaperonin"/>
    <property type="match status" value="1"/>
</dbReference>
<dbReference type="Gene3D" id="2.30.33.40">
    <property type="entry name" value="GroES chaperonin"/>
    <property type="match status" value="1"/>
</dbReference>
<dbReference type="HAMAP" id="MF_00580">
    <property type="entry name" value="CH10"/>
    <property type="match status" value="1"/>
</dbReference>
<dbReference type="InterPro" id="IPR020818">
    <property type="entry name" value="Chaperonin_GroES"/>
</dbReference>
<dbReference type="InterPro" id="IPR037124">
    <property type="entry name" value="Chaperonin_GroES_sf"/>
</dbReference>
<dbReference type="InterPro" id="IPR018369">
    <property type="entry name" value="Chaprnonin_Cpn10_CS"/>
</dbReference>
<dbReference type="InterPro" id="IPR011032">
    <property type="entry name" value="GroES-like_sf"/>
</dbReference>
<dbReference type="NCBIfam" id="NF001527">
    <property type="entry name" value="PRK00364.1-2"/>
    <property type="match status" value="1"/>
</dbReference>
<dbReference type="NCBIfam" id="NF001529">
    <property type="entry name" value="PRK00364.1-5"/>
    <property type="match status" value="1"/>
</dbReference>
<dbReference type="NCBIfam" id="NF001531">
    <property type="entry name" value="PRK00364.2-2"/>
    <property type="match status" value="1"/>
</dbReference>
<dbReference type="NCBIfam" id="NF001533">
    <property type="entry name" value="PRK00364.2-4"/>
    <property type="match status" value="1"/>
</dbReference>
<dbReference type="NCBIfam" id="NF001534">
    <property type="entry name" value="PRK00364.2-5"/>
    <property type="match status" value="1"/>
</dbReference>
<dbReference type="PANTHER" id="PTHR10772">
    <property type="entry name" value="10 KDA HEAT SHOCK PROTEIN"/>
    <property type="match status" value="1"/>
</dbReference>
<dbReference type="PANTHER" id="PTHR10772:SF58">
    <property type="entry name" value="CO-CHAPERONIN GROES"/>
    <property type="match status" value="1"/>
</dbReference>
<dbReference type="Pfam" id="PF00166">
    <property type="entry name" value="Cpn10"/>
    <property type="match status" value="1"/>
</dbReference>
<dbReference type="PRINTS" id="PR00297">
    <property type="entry name" value="CHAPERONIN10"/>
</dbReference>
<dbReference type="SMART" id="SM00883">
    <property type="entry name" value="Cpn10"/>
    <property type="match status" value="1"/>
</dbReference>
<dbReference type="SUPFAM" id="SSF50129">
    <property type="entry name" value="GroES-like"/>
    <property type="match status" value="1"/>
</dbReference>
<dbReference type="PROSITE" id="PS00681">
    <property type="entry name" value="CHAPERONINS_CPN10"/>
    <property type="match status" value="1"/>
</dbReference>
<organism>
    <name type="scientific">Myxococcus xanthus (strain DK1622)</name>
    <dbReference type="NCBI Taxonomy" id="246197"/>
    <lineage>
        <taxon>Bacteria</taxon>
        <taxon>Pseudomonadati</taxon>
        <taxon>Myxococcota</taxon>
        <taxon>Myxococcia</taxon>
        <taxon>Myxococcales</taxon>
        <taxon>Cystobacterineae</taxon>
        <taxon>Myxococcaceae</taxon>
        <taxon>Myxococcus</taxon>
    </lineage>
</organism>
<gene>
    <name evidence="1" type="primary">groES</name>
    <name evidence="1" type="synonym">groS</name>
    <name type="ordered locus">MXAN_4894</name>
</gene>
<feature type="chain" id="PRO_1000025308" description="Co-chaperonin GroES">
    <location>
        <begin position="1"/>
        <end position="96"/>
    </location>
</feature>
<evidence type="ECO:0000255" key="1">
    <source>
        <dbReference type="HAMAP-Rule" id="MF_00580"/>
    </source>
</evidence>
<name>CH10_MYXXD</name>